<comment type="function">
    <text evidence="1">DNA-dependent RNA polymerase catalyzes the transcription of DNA into RNA using the four ribonucleoside triphosphates as substrates.</text>
</comment>
<comment type="catalytic activity">
    <reaction evidence="1">
        <text>RNA(n) + a ribonucleoside 5'-triphosphate = RNA(n+1) + diphosphate</text>
        <dbReference type="Rhea" id="RHEA:21248"/>
        <dbReference type="Rhea" id="RHEA-COMP:14527"/>
        <dbReference type="Rhea" id="RHEA-COMP:17342"/>
        <dbReference type="ChEBI" id="CHEBI:33019"/>
        <dbReference type="ChEBI" id="CHEBI:61557"/>
        <dbReference type="ChEBI" id="CHEBI:140395"/>
        <dbReference type="EC" id="2.7.7.6"/>
    </reaction>
</comment>
<comment type="subunit">
    <text evidence="1">The RNAP catalytic core consists of 2 alpha, 1 beta, 1 beta' and 1 omega subunit. When a sigma factor is associated with the core the holoenzyme is formed, which can initiate transcription.</text>
</comment>
<comment type="similarity">
    <text evidence="1">Belongs to the RNA polymerase beta chain family.</text>
</comment>
<name>RPOB_HELMI</name>
<proteinExistence type="inferred from homology"/>
<protein>
    <recommendedName>
        <fullName evidence="1">DNA-directed RNA polymerase subunit beta</fullName>
        <shortName evidence="1">RNAP subunit beta</shortName>
        <ecNumber evidence="1">2.7.7.6</ecNumber>
    </recommendedName>
    <alternativeName>
        <fullName evidence="1">RNA polymerase subunit beta</fullName>
    </alternativeName>
    <alternativeName>
        <fullName evidence="1">Transcriptase subunit beta</fullName>
    </alternativeName>
</protein>
<reference key="1">
    <citation type="journal article" date="2008" name="J. Bacteriol.">
        <title>The genome of Heliobacterium modesticaldum, a phototrophic representative of the Firmicutes containing the simplest photosynthetic apparatus.</title>
        <authorList>
            <person name="Sattley W.M."/>
            <person name="Madigan M.T."/>
            <person name="Swingley W.D."/>
            <person name="Cheung P.C."/>
            <person name="Clocksin K.M."/>
            <person name="Conrad A.L."/>
            <person name="Dejesa L.C."/>
            <person name="Honchak B.M."/>
            <person name="Jung D.O."/>
            <person name="Karbach L.E."/>
            <person name="Kurdoglu A."/>
            <person name="Lahiri S."/>
            <person name="Mastrian S.D."/>
            <person name="Page L.E."/>
            <person name="Taylor H.L."/>
            <person name="Wang Z.T."/>
            <person name="Raymond J."/>
            <person name="Chen M."/>
            <person name="Blankenship R.E."/>
            <person name="Touchman J.W."/>
        </authorList>
    </citation>
    <scope>NUCLEOTIDE SEQUENCE [LARGE SCALE GENOMIC DNA]</scope>
    <source>
        <strain>ATCC 51547 / Ice1</strain>
    </source>
</reference>
<organism>
    <name type="scientific">Heliobacterium modesticaldum (strain ATCC 51547 / Ice1)</name>
    <dbReference type="NCBI Taxonomy" id="498761"/>
    <lineage>
        <taxon>Bacteria</taxon>
        <taxon>Bacillati</taxon>
        <taxon>Bacillota</taxon>
        <taxon>Clostridia</taxon>
        <taxon>Eubacteriales</taxon>
        <taxon>Heliobacteriaceae</taxon>
        <taxon>Heliomicrobium</taxon>
    </lineage>
</organism>
<accession>B0TC48</accession>
<dbReference type="EC" id="2.7.7.6" evidence="1"/>
<dbReference type="EMBL" id="CP000930">
    <property type="protein sequence ID" value="ABZ83947.1"/>
    <property type="molecule type" value="Genomic_DNA"/>
</dbReference>
<dbReference type="RefSeq" id="WP_012282463.1">
    <property type="nucleotide sequence ID" value="NC_010337.2"/>
</dbReference>
<dbReference type="SMR" id="B0TC48"/>
<dbReference type="STRING" id="498761.HM1_1370"/>
<dbReference type="KEGG" id="hmo:HM1_1370"/>
<dbReference type="eggNOG" id="COG0085">
    <property type="taxonomic scope" value="Bacteria"/>
</dbReference>
<dbReference type="HOGENOM" id="CLU_000524_4_1_9"/>
<dbReference type="OrthoDB" id="9803954at2"/>
<dbReference type="Proteomes" id="UP000008550">
    <property type="component" value="Chromosome"/>
</dbReference>
<dbReference type="GO" id="GO:0000428">
    <property type="term" value="C:DNA-directed RNA polymerase complex"/>
    <property type="evidence" value="ECO:0007669"/>
    <property type="project" value="UniProtKB-KW"/>
</dbReference>
<dbReference type="GO" id="GO:0003677">
    <property type="term" value="F:DNA binding"/>
    <property type="evidence" value="ECO:0007669"/>
    <property type="project" value="UniProtKB-UniRule"/>
</dbReference>
<dbReference type="GO" id="GO:0003899">
    <property type="term" value="F:DNA-directed RNA polymerase activity"/>
    <property type="evidence" value="ECO:0007669"/>
    <property type="project" value="UniProtKB-UniRule"/>
</dbReference>
<dbReference type="GO" id="GO:0032549">
    <property type="term" value="F:ribonucleoside binding"/>
    <property type="evidence" value="ECO:0007669"/>
    <property type="project" value="InterPro"/>
</dbReference>
<dbReference type="GO" id="GO:0006351">
    <property type="term" value="P:DNA-templated transcription"/>
    <property type="evidence" value="ECO:0007669"/>
    <property type="project" value="UniProtKB-UniRule"/>
</dbReference>
<dbReference type="CDD" id="cd00653">
    <property type="entry name" value="RNA_pol_B_RPB2"/>
    <property type="match status" value="1"/>
</dbReference>
<dbReference type="FunFam" id="3.90.1110.10:FF:000001">
    <property type="entry name" value="DNA-directed RNA polymerase subunit beta"/>
    <property type="match status" value="1"/>
</dbReference>
<dbReference type="FunFam" id="3.90.1800.10:FF:000001">
    <property type="entry name" value="DNA-directed RNA polymerase subunit beta"/>
    <property type="match status" value="1"/>
</dbReference>
<dbReference type="Gene3D" id="2.40.50.100">
    <property type="match status" value="1"/>
</dbReference>
<dbReference type="Gene3D" id="2.40.50.150">
    <property type="match status" value="1"/>
</dbReference>
<dbReference type="Gene3D" id="3.90.1100.10">
    <property type="match status" value="1"/>
</dbReference>
<dbReference type="Gene3D" id="2.30.150.10">
    <property type="entry name" value="DNA-directed RNA polymerase, beta subunit, external 1 domain"/>
    <property type="match status" value="1"/>
</dbReference>
<dbReference type="Gene3D" id="2.40.270.10">
    <property type="entry name" value="DNA-directed RNA polymerase, subunit 2, domain 6"/>
    <property type="match status" value="1"/>
</dbReference>
<dbReference type="Gene3D" id="3.90.1800.10">
    <property type="entry name" value="RNA polymerase alpha subunit dimerisation domain"/>
    <property type="match status" value="1"/>
</dbReference>
<dbReference type="Gene3D" id="3.90.1110.10">
    <property type="entry name" value="RNA polymerase Rpb2, domain 2"/>
    <property type="match status" value="1"/>
</dbReference>
<dbReference type="HAMAP" id="MF_01321">
    <property type="entry name" value="RNApol_bact_RpoB"/>
    <property type="match status" value="1"/>
</dbReference>
<dbReference type="InterPro" id="IPR042107">
    <property type="entry name" value="DNA-dir_RNA_pol_bsu_ext_1_sf"/>
</dbReference>
<dbReference type="InterPro" id="IPR019462">
    <property type="entry name" value="DNA-dir_RNA_pol_bsu_external_1"/>
</dbReference>
<dbReference type="InterPro" id="IPR015712">
    <property type="entry name" value="DNA-dir_RNA_pol_su2"/>
</dbReference>
<dbReference type="InterPro" id="IPR007120">
    <property type="entry name" value="DNA-dir_RNAP_su2_dom"/>
</dbReference>
<dbReference type="InterPro" id="IPR037033">
    <property type="entry name" value="DNA-dir_RNAP_su2_hyb_sf"/>
</dbReference>
<dbReference type="InterPro" id="IPR010243">
    <property type="entry name" value="RNA_pol_bsu_bac"/>
</dbReference>
<dbReference type="InterPro" id="IPR007121">
    <property type="entry name" value="RNA_pol_bsu_CS"/>
</dbReference>
<dbReference type="InterPro" id="IPR007644">
    <property type="entry name" value="RNA_pol_bsu_protrusion"/>
</dbReference>
<dbReference type="InterPro" id="IPR007642">
    <property type="entry name" value="RNA_pol_Rpb2_2"/>
</dbReference>
<dbReference type="InterPro" id="IPR037034">
    <property type="entry name" value="RNA_pol_Rpb2_2_sf"/>
</dbReference>
<dbReference type="InterPro" id="IPR007645">
    <property type="entry name" value="RNA_pol_Rpb2_3"/>
</dbReference>
<dbReference type="InterPro" id="IPR007641">
    <property type="entry name" value="RNA_pol_Rpb2_7"/>
</dbReference>
<dbReference type="InterPro" id="IPR014724">
    <property type="entry name" value="RNA_pol_RPB2_OB-fold"/>
</dbReference>
<dbReference type="NCBIfam" id="NF001616">
    <property type="entry name" value="PRK00405.1"/>
    <property type="match status" value="1"/>
</dbReference>
<dbReference type="NCBIfam" id="TIGR02013">
    <property type="entry name" value="rpoB"/>
    <property type="match status" value="1"/>
</dbReference>
<dbReference type="PANTHER" id="PTHR20856">
    <property type="entry name" value="DNA-DIRECTED RNA POLYMERASE I SUBUNIT 2"/>
    <property type="match status" value="1"/>
</dbReference>
<dbReference type="Pfam" id="PF04563">
    <property type="entry name" value="RNA_pol_Rpb2_1"/>
    <property type="match status" value="1"/>
</dbReference>
<dbReference type="Pfam" id="PF04561">
    <property type="entry name" value="RNA_pol_Rpb2_2"/>
    <property type="match status" value="1"/>
</dbReference>
<dbReference type="Pfam" id="PF04565">
    <property type="entry name" value="RNA_pol_Rpb2_3"/>
    <property type="match status" value="1"/>
</dbReference>
<dbReference type="Pfam" id="PF10385">
    <property type="entry name" value="RNA_pol_Rpb2_45"/>
    <property type="match status" value="1"/>
</dbReference>
<dbReference type="Pfam" id="PF00562">
    <property type="entry name" value="RNA_pol_Rpb2_6"/>
    <property type="match status" value="1"/>
</dbReference>
<dbReference type="Pfam" id="PF04560">
    <property type="entry name" value="RNA_pol_Rpb2_7"/>
    <property type="match status" value="1"/>
</dbReference>
<dbReference type="SUPFAM" id="SSF64484">
    <property type="entry name" value="beta and beta-prime subunits of DNA dependent RNA-polymerase"/>
    <property type="match status" value="1"/>
</dbReference>
<dbReference type="PROSITE" id="PS01166">
    <property type="entry name" value="RNA_POL_BETA"/>
    <property type="match status" value="1"/>
</dbReference>
<keyword id="KW-0240">DNA-directed RNA polymerase</keyword>
<keyword id="KW-0548">Nucleotidyltransferase</keyword>
<keyword id="KW-1185">Reference proteome</keyword>
<keyword id="KW-0804">Transcription</keyword>
<keyword id="KW-0808">Transferase</keyword>
<sequence length="1154" mass="129582">MVYPVQCGPRERWTFARIQEVMDMPNLIEIQQNSYRWFLEEGLREMFRDISPIQDFTGNLILEFIDYALGEPKYSVEECKERDVTFAAPLRVKVRLINKETGEVKEQEVFMGDFPLMTDKGTFIINGAERVIVSQLVRSPGVYYNEAIDPPSGKKLFGATIIPNRGAWLEFETDINDNIFVRIDRTRKLPATVLIRALGYSNNAQVQELFDGDERIRITLERDNTENTEEALVEIYKRLRPGEPPTVDSARSLLETLFFDPKRYDLAKVGRYKINKRLGISVEREVRHLTKDDIIAAIRELLKLMQGDGRADDIDHLGNRRLRSVGELLQNQFRIGLSRMERVVRERMTIQDVEVITPQVLINIRPVVAAIKEFFGSSQLSQFMDQTNPLAELTHKRRLSALGPGGLSRERAGFEVRDVHHSHYGRMCPIETPEGPNIGLIGSLSTFARINEYGFIETPYRKVDKERGVVTDQIDYLTADEEDKYIVAQANAPLDEEGRFKEKRVNARHGHDILVVPVEKVDYMDVSPKQVVSIATALIPFLEHDDANRALMGANMQRQAVPLLRTDAPYVGTGMEFKAAYDSGVCAIARKAGYVERVTGDEILIRCDDGTTEHHKLLKFLRSNQGTCINQKPICHKGQRIEAGQIIADGPSTDQGELALGRNVLVAFMTWEGYNYEDAILVNEKLVKEDYFTSIHIEEYECDSRDTKLGPEEITRDIPNVGEEVLKDLDDRGIIRVGAEVRPGDILVGKVTPKGETELTAEERLLRAIFGEKAREVRDTSLRVPHGEAGKIVDVKVFSRENGDELAPGVNQLVRVYIAQKRKISEGDKMAGRHGNKGVISRIMPEADMPYLPDGTPVEIVLNPLGVPSRMNIGQILETHLGWASKHMDRGVLIEGKPSGEKGIRVATPVFDGATEDDIFEFLTKAGLPKANEIALTDTRTESLRESMAAVPLGKSILYDGRTGEPFDNPITVGYMYMLKLAHLVDDKIHARSTGPYSLVTQQPLGGKAQFGGQRFGEMEVWALEAYGAAYTLQEILTVKSDDVVGRVKTYEAIVKGENIPEPGVPESFKVLIKELQSLGLDVKILSEDEREIEIKEVEEDVAETAKELGIDIQGEDRSERAGEPASPDEMDDEEEIDYAAGFLQDALEELEED</sequence>
<evidence type="ECO:0000255" key="1">
    <source>
        <dbReference type="HAMAP-Rule" id="MF_01321"/>
    </source>
</evidence>
<evidence type="ECO:0000256" key="2">
    <source>
        <dbReference type="SAM" id="MobiDB-lite"/>
    </source>
</evidence>
<gene>
    <name evidence="1" type="primary">rpoB</name>
    <name type="ordered locus">Helmi_13220</name>
    <name type="ORF">HM1_1370</name>
</gene>
<feature type="chain" id="PRO_1000141701" description="DNA-directed RNA polymerase subunit beta">
    <location>
        <begin position="1"/>
        <end position="1154"/>
    </location>
</feature>
<feature type="region of interest" description="Disordered" evidence="2">
    <location>
        <begin position="1108"/>
        <end position="1136"/>
    </location>
</feature>
<feature type="compositionally biased region" description="Basic and acidic residues" evidence="2">
    <location>
        <begin position="1108"/>
        <end position="1123"/>
    </location>
</feature>
<feature type="compositionally biased region" description="Acidic residues" evidence="2">
    <location>
        <begin position="1127"/>
        <end position="1136"/>
    </location>
</feature>